<accession>A5CVC5</accession>
<keyword id="KW-0255">Endonuclease</keyword>
<keyword id="KW-0378">Hydrolase</keyword>
<keyword id="KW-0540">Nuclease</keyword>
<keyword id="KW-0694">RNA-binding</keyword>
<keyword id="KW-0819">tRNA processing</keyword>
<gene>
    <name evidence="1" type="primary">rnpA</name>
    <name type="ordered locus">CMM_2977</name>
</gene>
<organism>
    <name type="scientific">Clavibacter michiganensis subsp. michiganensis (strain NCPPB 382)</name>
    <dbReference type="NCBI Taxonomy" id="443906"/>
    <lineage>
        <taxon>Bacteria</taxon>
        <taxon>Bacillati</taxon>
        <taxon>Actinomycetota</taxon>
        <taxon>Actinomycetes</taxon>
        <taxon>Micrococcales</taxon>
        <taxon>Microbacteriaceae</taxon>
        <taxon>Clavibacter</taxon>
    </lineage>
</organism>
<proteinExistence type="inferred from homology"/>
<feature type="chain" id="PRO_1000021394" description="Ribonuclease P protein component">
    <location>
        <begin position="1"/>
        <end position="113"/>
    </location>
</feature>
<sequence>MLARRNRVTSGADYRIIVRRGRRTTTGTAVVSALAGPDDAPTRFGFIISKKVGNAVTRNLVRRRLKAVSAGLLHSVPPGTSIVIRVLPGMERTAWDTLQEEMASAVTRAVRTI</sequence>
<protein>
    <recommendedName>
        <fullName evidence="1">Ribonuclease P protein component</fullName>
        <shortName evidence="1">RNase P protein</shortName>
        <shortName evidence="1">RNaseP protein</shortName>
        <ecNumber evidence="1">3.1.26.5</ecNumber>
    </recommendedName>
    <alternativeName>
        <fullName evidence="1">Protein C5</fullName>
    </alternativeName>
</protein>
<dbReference type="EC" id="3.1.26.5" evidence="1"/>
<dbReference type="EMBL" id="AM711867">
    <property type="protein sequence ID" value="CAN03064.1"/>
    <property type="molecule type" value="Genomic_DNA"/>
</dbReference>
<dbReference type="RefSeq" id="WP_012039664.1">
    <property type="nucleotide sequence ID" value="NC_009480.1"/>
</dbReference>
<dbReference type="SMR" id="A5CVC5"/>
<dbReference type="GeneID" id="92948995"/>
<dbReference type="KEGG" id="cmi:CMM_2977"/>
<dbReference type="eggNOG" id="COG0594">
    <property type="taxonomic scope" value="Bacteria"/>
</dbReference>
<dbReference type="HOGENOM" id="CLU_117179_4_1_11"/>
<dbReference type="OrthoDB" id="196964at2"/>
<dbReference type="Proteomes" id="UP000001564">
    <property type="component" value="Chromosome"/>
</dbReference>
<dbReference type="GO" id="GO:0030677">
    <property type="term" value="C:ribonuclease P complex"/>
    <property type="evidence" value="ECO:0007669"/>
    <property type="project" value="TreeGrafter"/>
</dbReference>
<dbReference type="GO" id="GO:0042781">
    <property type="term" value="F:3'-tRNA processing endoribonuclease activity"/>
    <property type="evidence" value="ECO:0007669"/>
    <property type="project" value="TreeGrafter"/>
</dbReference>
<dbReference type="GO" id="GO:0004526">
    <property type="term" value="F:ribonuclease P activity"/>
    <property type="evidence" value="ECO:0007669"/>
    <property type="project" value="UniProtKB-UniRule"/>
</dbReference>
<dbReference type="GO" id="GO:0000049">
    <property type="term" value="F:tRNA binding"/>
    <property type="evidence" value="ECO:0007669"/>
    <property type="project" value="UniProtKB-UniRule"/>
</dbReference>
<dbReference type="GO" id="GO:0001682">
    <property type="term" value="P:tRNA 5'-leader removal"/>
    <property type="evidence" value="ECO:0007669"/>
    <property type="project" value="UniProtKB-UniRule"/>
</dbReference>
<dbReference type="Gene3D" id="3.30.230.10">
    <property type="match status" value="1"/>
</dbReference>
<dbReference type="HAMAP" id="MF_00227">
    <property type="entry name" value="RNase_P"/>
    <property type="match status" value="1"/>
</dbReference>
<dbReference type="InterPro" id="IPR020568">
    <property type="entry name" value="Ribosomal_Su5_D2-typ_SF"/>
</dbReference>
<dbReference type="InterPro" id="IPR014721">
    <property type="entry name" value="Ribsml_uS5_D2-typ_fold_subgr"/>
</dbReference>
<dbReference type="InterPro" id="IPR000100">
    <property type="entry name" value="RNase_P"/>
</dbReference>
<dbReference type="InterPro" id="IPR020539">
    <property type="entry name" value="RNase_P_CS"/>
</dbReference>
<dbReference type="NCBIfam" id="TIGR00188">
    <property type="entry name" value="rnpA"/>
    <property type="match status" value="1"/>
</dbReference>
<dbReference type="PANTHER" id="PTHR33992">
    <property type="entry name" value="RIBONUCLEASE P PROTEIN COMPONENT"/>
    <property type="match status" value="1"/>
</dbReference>
<dbReference type="PANTHER" id="PTHR33992:SF1">
    <property type="entry name" value="RIBONUCLEASE P PROTEIN COMPONENT"/>
    <property type="match status" value="1"/>
</dbReference>
<dbReference type="Pfam" id="PF00825">
    <property type="entry name" value="Ribonuclease_P"/>
    <property type="match status" value="1"/>
</dbReference>
<dbReference type="SUPFAM" id="SSF54211">
    <property type="entry name" value="Ribosomal protein S5 domain 2-like"/>
    <property type="match status" value="1"/>
</dbReference>
<dbReference type="PROSITE" id="PS00648">
    <property type="entry name" value="RIBONUCLEASE_P"/>
    <property type="match status" value="1"/>
</dbReference>
<reference key="1">
    <citation type="journal article" date="2008" name="J. Bacteriol.">
        <title>The genome sequence of the tomato-pathogenic actinomycete Clavibacter michiganensis subsp. michiganensis NCPPB382 reveals a large island involved in pathogenicity.</title>
        <authorList>
            <person name="Gartemann K.-H."/>
            <person name="Abt B."/>
            <person name="Bekel T."/>
            <person name="Burger A."/>
            <person name="Engemann J."/>
            <person name="Fluegel M."/>
            <person name="Gaigalat L."/>
            <person name="Goesmann A."/>
            <person name="Graefen I."/>
            <person name="Kalinowski J."/>
            <person name="Kaup O."/>
            <person name="Kirchner O."/>
            <person name="Krause L."/>
            <person name="Linke B."/>
            <person name="McHardy A."/>
            <person name="Meyer F."/>
            <person name="Pohle S."/>
            <person name="Rueckert C."/>
            <person name="Schneiker S."/>
            <person name="Zellermann E.-M."/>
            <person name="Puehler A."/>
            <person name="Eichenlaub R."/>
            <person name="Kaiser O."/>
            <person name="Bartels D."/>
        </authorList>
    </citation>
    <scope>NUCLEOTIDE SEQUENCE [LARGE SCALE GENOMIC DNA]</scope>
    <source>
        <strain>NCPPB 382</strain>
    </source>
</reference>
<name>RNPA_CLAM3</name>
<evidence type="ECO:0000255" key="1">
    <source>
        <dbReference type="HAMAP-Rule" id="MF_00227"/>
    </source>
</evidence>
<comment type="function">
    <text evidence="1">RNaseP catalyzes the removal of the 5'-leader sequence from pre-tRNA to produce the mature 5'-terminus. It can also cleave other RNA substrates such as 4.5S RNA. The protein component plays an auxiliary but essential role in vivo by binding to the 5'-leader sequence and broadening the substrate specificity of the ribozyme.</text>
</comment>
<comment type="catalytic activity">
    <reaction evidence="1">
        <text>Endonucleolytic cleavage of RNA, removing 5'-extranucleotides from tRNA precursor.</text>
        <dbReference type="EC" id="3.1.26.5"/>
    </reaction>
</comment>
<comment type="subunit">
    <text evidence="1">Consists of a catalytic RNA component (M1 or rnpB) and a protein subunit.</text>
</comment>
<comment type="similarity">
    <text evidence="1">Belongs to the RnpA family.</text>
</comment>